<sequence length="195" mass="21709">MSALVPIVIEQTNRGERAYDIYSRLLKDRIVILSGEITDDIASLIVAQLLFLEAEDPDKDIYLYINSPGGSVTAGFAIYDTIQYIKPDVSTICVGMAASMGAFLLAAGAKGKRFALPNSEIMIHQPIGGVRGQATDIKIHAEWILKIKQRINRILAERTGQPIEVIERDTERDFFMTAEEALKYGIIDKVIERRP</sequence>
<accession>A4XHW0</accession>
<evidence type="ECO:0000255" key="1">
    <source>
        <dbReference type="HAMAP-Rule" id="MF_00444"/>
    </source>
</evidence>
<comment type="function">
    <text evidence="1">Cleaves peptides in various proteins in a process that requires ATP hydrolysis. Has a chymotrypsin-like activity. Plays a major role in the degradation of misfolded proteins.</text>
</comment>
<comment type="catalytic activity">
    <reaction evidence="1">
        <text>Hydrolysis of proteins to small peptides in the presence of ATP and magnesium. alpha-casein is the usual test substrate. In the absence of ATP, only oligopeptides shorter than five residues are hydrolyzed (such as succinyl-Leu-Tyr-|-NHMec, and Leu-Tyr-Leu-|-Tyr-Trp, in which cleavage of the -Tyr-|-Leu- and -Tyr-|-Trp bonds also occurs).</text>
        <dbReference type="EC" id="3.4.21.92"/>
    </reaction>
</comment>
<comment type="subunit">
    <text evidence="1">Fourteen ClpP subunits assemble into 2 heptameric rings which stack back to back to give a disk-like structure with a central cavity, resembling the structure of eukaryotic proteasomes.</text>
</comment>
<comment type="subcellular location">
    <subcellularLocation>
        <location evidence="1">Cytoplasm</location>
    </subcellularLocation>
</comment>
<comment type="similarity">
    <text evidence="1">Belongs to the peptidase S14 family.</text>
</comment>
<name>CLPP_CALS8</name>
<keyword id="KW-0963">Cytoplasm</keyword>
<keyword id="KW-0378">Hydrolase</keyword>
<keyword id="KW-0645">Protease</keyword>
<keyword id="KW-0720">Serine protease</keyword>
<dbReference type="EC" id="3.4.21.92" evidence="1"/>
<dbReference type="EMBL" id="CP000679">
    <property type="protein sequence ID" value="ABP66495.1"/>
    <property type="molecule type" value="Genomic_DNA"/>
</dbReference>
<dbReference type="RefSeq" id="WP_011916441.1">
    <property type="nucleotide sequence ID" value="NC_009437.1"/>
</dbReference>
<dbReference type="SMR" id="A4XHW0"/>
<dbReference type="STRING" id="351627.Csac_0879"/>
<dbReference type="MEROPS" id="S14.001"/>
<dbReference type="KEGG" id="csc:Csac_0879"/>
<dbReference type="eggNOG" id="COG0740">
    <property type="taxonomic scope" value="Bacteria"/>
</dbReference>
<dbReference type="HOGENOM" id="CLU_058707_3_2_9"/>
<dbReference type="OrthoDB" id="9802800at2"/>
<dbReference type="Proteomes" id="UP000000256">
    <property type="component" value="Chromosome"/>
</dbReference>
<dbReference type="GO" id="GO:0005737">
    <property type="term" value="C:cytoplasm"/>
    <property type="evidence" value="ECO:0007669"/>
    <property type="project" value="UniProtKB-SubCell"/>
</dbReference>
<dbReference type="GO" id="GO:0009368">
    <property type="term" value="C:endopeptidase Clp complex"/>
    <property type="evidence" value="ECO:0007669"/>
    <property type="project" value="TreeGrafter"/>
</dbReference>
<dbReference type="GO" id="GO:0004176">
    <property type="term" value="F:ATP-dependent peptidase activity"/>
    <property type="evidence" value="ECO:0007669"/>
    <property type="project" value="InterPro"/>
</dbReference>
<dbReference type="GO" id="GO:0051117">
    <property type="term" value="F:ATPase binding"/>
    <property type="evidence" value="ECO:0007669"/>
    <property type="project" value="TreeGrafter"/>
</dbReference>
<dbReference type="GO" id="GO:0004252">
    <property type="term" value="F:serine-type endopeptidase activity"/>
    <property type="evidence" value="ECO:0007669"/>
    <property type="project" value="UniProtKB-UniRule"/>
</dbReference>
<dbReference type="GO" id="GO:0006515">
    <property type="term" value="P:protein quality control for misfolded or incompletely synthesized proteins"/>
    <property type="evidence" value="ECO:0007669"/>
    <property type="project" value="TreeGrafter"/>
</dbReference>
<dbReference type="CDD" id="cd07017">
    <property type="entry name" value="S14_ClpP_2"/>
    <property type="match status" value="1"/>
</dbReference>
<dbReference type="FunFam" id="3.90.226.10:FF:000001">
    <property type="entry name" value="ATP-dependent Clp protease proteolytic subunit"/>
    <property type="match status" value="1"/>
</dbReference>
<dbReference type="Gene3D" id="3.90.226.10">
    <property type="entry name" value="2-enoyl-CoA Hydratase, Chain A, domain 1"/>
    <property type="match status" value="1"/>
</dbReference>
<dbReference type="HAMAP" id="MF_00444">
    <property type="entry name" value="ClpP"/>
    <property type="match status" value="1"/>
</dbReference>
<dbReference type="InterPro" id="IPR001907">
    <property type="entry name" value="ClpP"/>
</dbReference>
<dbReference type="InterPro" id="IPR029045">
    <property type="entry name" value="ClpP/crotonase-like_dom_sf"/>
</dbReference>
<dbReference type="InterPro" id="IPR023562">
    <property type="entry name" value="ClpP/TepA"/>
</dbReference>
<dbReference type="InterPro" id="IPR033135">
    <property type="entry name" value="ClpP_His_AS"/>
</dbReference>
<dbReference type="InterPro" id="IPR018215">
    <property type="entry name" value="ClpP_Ser_AS"/>
</dbReference>
<dbReference type="NCBIfam" id="TIGR00493">
    <property type="entry name" value="clpP"/>
    <property type="match status" value="1"/>
</dbReference>
<dbReference type="NCBIfam" id="NF001368">
    <property type="entry name" value="PRK00277.1"/>
    <property type="match status" value="1"/>
</dbReference>
<dbReference type="NCBIfam" id="NF009205">
    <property type="entry name" value="PRK12553.1"/>
    <property type="match status" value="1"/>
</dbReference>
<dbReference type="PANTHER" id="PTHR10381">
    <property type="entry name" value="ATP-DEPENDENT CLP PROTEASE PROTEOLYTIC SUBUNIT"/>
    <property type="match status" value="1"/>
</dbReference>
<dbReference type="PANTHER" id="PTHR10381:SF70">
    <property type="entry name" value="ATP-DEPENDENT CLP PROTEASE PROTEOLYTIC SUBUNIT"/>
    <property type="match status" value="1"/>
</dbReference>
<dbReference type="Pfam" id="PF00574">
    <property type="entry name" value="CLP_protease"/>
    <property type="match status" value="1"/>
</dbReference>
<dbReference type="PRINTS" id="PR00127">
    <property type="entry name" value="CLPPROTEASEP"/>
</dbReference>
<dbReference type="SUPFAM" id="SSF52096">
    <property type="entry name" value="ClpP/crotonase"/>
    <property type="match status" value="1"/>
</dbReference>
<dbReference type="PROSITE" id="PS00382">
    <property type="entry name" value="CLP_PROTEASE_HIS"/>
    <property type="match status" value="1"/>
</dbReference>
<dbReference type="PROSITE" id="PS00381">
    <property type="entry name" value="CLP_PROTEASE_SER"/>
    <property type="match status" value="1"/>
</dbReference>
<proteinExistence type="inferred from homology"/>
<protein>
    <recommendedName>
        <fullName evidence="1">ATP-dependent Clp protease proteolytic subunit</fullName>
        <ecNumber evidence="1">3.4.21.92</ecNumber>
    </recommendedName>
    <alternativeName>
        <fullName evidence="1">Endopeptidase Clp</fullName>
    </alternativeName>
</protein>
<gene>
    <name evidence="1" type="primary">clpP</name>
    <name type="ordered locus">Csac_0879</name>
</gene>
<reference key="1">
    <citation type="submission" date="2007-04" db="EMBL/GenBank/DDBJ databases">
        <title>Genome sequence of the thermophilic hydrogen-producing bacterium Caldicellulosiruptor saccharolyticus DSM 8903.</title>
        <authorList>
            <person name="Copeland A."/>
            <person name="Lucas S."/>
            <person name="Lapidus A."/>
            <person name="Barry K."/>
            <person name="Detter J.C."/>
            <person name="Glavina del Rio T."/>
            <person name="Hammon N."/>
            <person name="Israni S."/>
            <person name="Dalin E."/>
            <person name="Tice H."/>
            <person name="Pitluck S."/>
            <person name="Kiss H."/>
            <person name="Brettin T."/>
            <person name="Bruce D."/>
            <person name="Han C."/>
            <person name="Schmutz J."/>
            <person name="Larimer F."/>
            <person name="Land M."/>
            <person name="Hauser L."/>
            <person name="Kyrpides N."/>
            <person name="Lykidis A."/>
            <person name="van de Werken H.J.G."/>
            <person name="Verhaart M.R.A."/>
            <person name="VanFossen A.L."/>
            <person name="Lewis D.L."/>
            <person name="Nichols J.D."/>
            <person name="Goorissen H.P."/>
            <person name="van Niel E.W.J."/>
            <person name="Stams F.J.M."/>
            <person name="Willquist K.U."/>
            <person name="Ward D.E."/>
            <person name="van der Oost J."/>
            <person name="Kelly R.M."/>
            <person name="Kengen S.M.W."/>
            <person name="Richardson P."/>
        </authorList>
    </citation>
    <scope>NUCLEOTIDE SEQUENCE [LARGE SCALE GENOMIC DNA]</scope>
    <source>
        <strain>ATCC 43494 / DSM 8903 / Tp8T 6331</strain>
    </source>
</reference>
<organism>
    <name type="scientific">Caldicellulosiruptor saccharolyticus (strain ATCC 43494 / DSM 8903 / Tp8T 6331)</name>
    <dbReference type="NCBI Taxonomy" id="351627"/>
    <lineage>
        <taxon>Bacteria</taxon>
        <taxon>Bacillati</taxon>
        <taxon>Bacillota</taxon>
        <taxon>Bacillota incertae sedis</taxon>
        <taxon>Caldicellulosiruptorales</taxon>
        <taxon>Caldicellulosiruptoraceae</taxon>
        <taxon>Caldicellulosiruptor</taxon>
    </lineage>
</organism>
<feature type="chain" id="PRO_1000026076" description="ATP-dependent Clp protease proteolytic subunit">
    <location>
        <begin position="1"/>
        <end position="195"/>
    </location>
</feature>
<feature type="active site" description="Nucleophile" evidence="1">
    <location>
        <position position="99"/>
    </location>
</feature>
<feature type="active site" evidence="1">
    <location>
        <position position="124"/>
    </location>
</feature>